<comment type="function">
    <text evidence="1">Required for the proper initiation of DNA replication. Required for mitochondrial morphology (By similarity).</text>
</comment>
<comment type="subcellular location">
    <subcellularLocation>
        <location evidence="1">Nucleus</location>
    </subcellularLocation>
    <subcellularLocation>
        <location evidence="1">Cytoplasm</location>
        <location evidence="1">Cytoskeleton</location>
        <location evidence="1">Spindle pole</location>
    </subcellularLocation>
</comment>
<comment type="similarity">
    <text evidence="2">Belongs to the SLD7 family.</text>
</comment>
<proteinExistence type="evidence at protein level"/>
<evidence type="ECO:0000250" key="1"/>
<evidence type="ECO:0000305" key="2"/>
<evidence type="ECO:0007829" key="3">
    <source>
        <dbReference type="PDB" id="3X37"/>
    </source>
</evidence>
<dbReference type="EMBL" id="CU928174">
    <property type="protein sequence ID" value="CAR26697.1"/>
    <property type="molecule type" value="Genomic_DNA"/>
</dbReference>
<dbReference type="RefSeq" id="XP_002495630.1">
    <property type="nucleotide sequence ID" value="XM_002495585.1"/>
</dbReference>
<dbReference type="PDB" id="3X37">
    <property type="method" value="X-ray"/>
    <property type="resolution" value="2.35 A"/>
    <property type="chains" value="B=1-133"/>
</dbReference>
<dbReference type="PDBsum" id="3X37"/>
<dbReference type="SMR" id="C5DSD6"/>
<dbReference type="FunCoup" id="C5DSD6">
    <property type="interactions" value="16"/>
</dbReference>
<dbReference type="STRING" id="559307.C5DSD6"/>
<dbReference type="GeneID" id="8202805"/>
<dbReference type="KEGG" id="zro:ZYRO0B16016g"/>
<dbReference type="HOGENOM" id="CLU_072105_0_0_1"/>
<dbReference type="InParanoid" id="C5DSD6"/>
<dbReference type="EvolutionaryTrace" id="C5DSD6"/>
<dbReference type="Proteomes" id="UP000008536">
    <property type="component" value="Chromosome B"/>
</dbReference>
<dbReference type="GO" id="GO:0005737">
    <property type="term" value="C:cytoplasm"/>
    <property type="evidence" value="ECO:0007669"/>
    <property type="project" value="UniProtKB-KW"/>
</dbReference>
<dbReference type="GO" id="GO:0005634">
    <property type="term" value="C:nucleus"/>
    <property type="evidence" value="ECO:0007669"/>
    <property type="project" value="UniProtKB-SubCell"/>
</dbReference>
<dbReference type="GO" id="GO:0000922">
    <property type="term" value="C:spindle pole"/>
    <property type="evidence" value="ECO:0007669"/>
    <property type="project" value="UniProtKB-SubCell"/>
</dbReference>
<dbReference type="GO" id="GO:0006260">
    <property type="term" value="P:DNA replication"/>
    <property type="evidence" value="ECO:0007669"/>
    <property type="project" value="UniProtKB-KW"/>
</dbReference>
<dbReference type="InterPro" id="IPR041260">
    <property type="entry name" value="Sld7_C"/>
</dbReference>
<dbReference type="InterPro" id="IPR041564">
    <property type="entry name" value="Sld7_N"/>
</dbReference>
<dbReference type="Pfam" id="PF18596">
    <property type="entry name" value="Sld7_C"/>
    <property type="match status" value="1"/>
</dbReference>
<dbReference type="Pfam" id="PF18636">
    <property type="entry name" value="Sld7_N"/>
    <property type="match status" value="1"/>
</dbReference>
<protein>
    <recommendedName>
        <fullName>Mitochondrial morphogenesis protein SLD7</fullName>
    </recommendedName>
</protein>
<reference key="1">
    <citation type="journal article" date="2009" name="Genome Res.">
        <title>Comparative genomics of protoploid Saccharomycetaceae.</title>
        <authorList>
            <consortium name="The Genolevures Consortium"/>
            <person name="Souciet J.-L."/>
            <person name="Dujon B."/>
            <person name="Gaillardin C."/>
            <person name="Johnston M."/>
            <person name="Baret P.V."/>
            <person name="Cliften P."/>
            <person name="Sherman D.J."/>
            <person name="Weissenbach J."/>
            <person name="Westhof E."/>
            <person name="Wincker P."/>
            <person name="Jubin C."/>
            <person name="Poulain J."/>
            <person name="Barbe V."/>
            <person name="Segurens B."/>
            <person name="Artiguenave F."/>
            <person name="Anthouard V."/>
            <person name="Vacherie B."/>
            <person name="Val M.-E."/>
            <person name="Fulton R.S."/>
            <person name="Minx P."/>
            <person name="Wilson R."/>
            <person name="Durrens P."/>
            <person name="Jean G."/>
            <person name="Marck C."/>
            <person name="Martin T."/>
            <person name="Nikolski M."/>
            <person name="Rolland T."/>
            <person name="Seret M.-L."/>
            <person name="Casaregola S."/>
            <person name="Despons L."/>
            <person name="Fairhead C."/>
            <person name="Fischer G."/>
            <person name="Lafontaine I."/>
            <person name="Leh V."/>
            <person name="Lemaire M."/>
            <person name="de Montigny J."/>
            <person name="Neuveglise C."/>
            <person name="Thierry A."/>
            <person name="Blanc-Lenfle I."/>
            <person name="Bleykasten C."/>
            <person name="Diffels J."/>
            <person name="Fritsch E."/>
            <person name="Frangeul L."/>
            <person name="Goeffon A."/>
            <person name="Jauniaux N."/>
            <person name="Kachouri-Lafond R."/>
            <person name="Payen C."/>
            <person name="Potier S."/>
            <person name="Pribylova L."/>
            <person name="Ozanne C."/>
            <person name="Richard G.-F."/>
            <person name="Sacerdot C."/>
            <person name="Straub M.-L."/>
            <person name="Talla E."/>
        </authorList>
    </citation>
    <scope>NUCLEOTIDE SEQUENCE [LARGE SCALE GENOMIC DNA]</scope>
    <source>
        <strain>ATCC 2623 / CBS 732 / BCRC 21506 / NBRC 1130 / NCYC 568 / NRRL Y-229</strain>
    </source>
</reference>
<accession>C5DSD6</accession>
<sequence length="243" mass="27997">MLEQNAVLKFTLGEKYDDIIVKDVQLWSQEPPKADGIKQLKGRLLQYVDMNKLPLWATTGSKNYVVYTWRSSTTSYFASKLKNENRGIVIDLLNGTNNNDHLLILHRKLKKVQCLKLNLNVKRKFDNQLISRTVQTTSKEGSIDSIVQQSQRQNQFKAKTIRNHVRTSEKKITFNETLSKLILGGLRLRGIPNTQSGFQKLYKITFDAAEFAHRDELKHSDAEVPFETLQETVEVLLKLFCKS</sequence>
<feature type="chain" id="PRO_0000411039" description="Mitochondrial morphogenesis protein SLD7">
    <location>
        <begin position="1"/>
        <end position="243"/>
    </location>
</feature>
<feature type="strand" evidence="3">
    <location>
        <begin position="3"/>
        <end position="11"/>
    </location>
</feature>
<feature type="helix" evidence="3">
    <location>
        <begin position="14"/>
        <end position="16"/>
    </location>
</feature>
<feature type="strand" evidence="3">
    <location>
        <begin position="20"/>
        <end position="30"/>
    </location>
</feature>
<feature type="strand" evidence="3">
    <location>
        <begin position="34"/>
        <end position="49"/>
    </location>
</feature>
<feature type="helix" evidence="3">
    <location>
        <begin position="50"/>
        <end position="52"/>
    </location>
</feature>
<feature type="helix" evidence="3">
    <location>
        <begin position="55"/>
        <end position="58"/>
    </location>
</feature>
<feature type="strand" evidence="3">
    <location>
        <begin position="62"/>
        <end position="67"/>
    </location>
</feature>
<feature type="helix" evidence="3">
    <location>
        <begin position="71"/>
        <end position="80"/>
    </location>
</feature>
<feature type="strand" evidence="3">
    <location>
        <begin position="86"/>
        <end position="92"/>
    </location>
</feature>
<feature type="strand" evidence="3">
    <location>
        <begin position="94"/>
        <end position="97"/>
    </location>
</feature>
<feature type="strand" evidence="3">
    <location>
        <begin position="100"/>
        <end position="108"/>
    </location>
</feature>
<feature type="strand" evidence="3">
    <location>
        <begin position="111"/>
        <end position="118"/>
    </location>
</feature>
<feature type="helix" evidence="3">
    <location>
        <begin position="119"/>
        <end position="122"/>
    </location>
</feature>
<feature type="helix" evidence="3">
    <location>
        <begin position="123"/>
        <end position="127"/>
    </location>
</feature>
<organism>
    <name type="scientific">Zygosaccharomyces rouxii (strain ATCC 2623 / CBS 732 / NBRC 1130 / NCYC 568 / NRRL Y-229)</name>
    <dbReference type="NCBI Taxonomy" id="559307"/>
    <lineage>
        <taxon>Eukaryota</taxon>
        <taxon>Fungi</taxon>
        <taxon>Dikarya</taxon>
        <taxon>Ascomycota</taxon>
        <taxon>Saccharomycotina</taxon>
        <taxon>Saccharomycetes</taxon>
        <taxon>Saccharomycetales</taxon>
        <taxon>Saccharomycetaceae</taxon>
        <taxon>Zygosaccharomyces</taxon>
    </lineage>
</organism>
<keyword id="KW-0002">3D-structure</keyword>
<keyword id="KW-0131">Cell cycle</keyword>
<keyword id="KW-0963">Cytoplasm</keyword>
<keyword id="KW-0206">Cytoskeleton</keyword>
<keyword id="KW-0235">DNA replication</keyword>
<keyword id="KW-0539">Nucleus</keyword>
<keyword id="KW-1185">Reference proteome</keyword>
<name>SLD7_ZYGRC</name>
<gene>
    <name type="primary">SLD7</name>
    <name type="ordered locus">ZYRO0B16016g</name>
</gene>